<organism>
    <name type="scientific">Rattus norvegicus</name>
    <name type="common">Rat</name>
    <dbReference type="NCBI Taxonomy" id="10116"/>
    <lineage>
        <taxon>Eukaryota</taxon>
        <taxon>Metazoa</taxon>
        <taxon>Chordata</taxon>
        <taxon>Craniata</taxon>
        <taxon>Vertebrata</taxon>
        <taxon>Euteleostomi</taxon>
        <taxon>Mammalia</taxon>
        <taxon>Eutheria</taxon>
        <taxon>Euarchontoglires</taxon>
        <taxon>Glires</taxon>
        <taxon>Rodentia</taxon>
        <taxon>Myomorpha</taxon>
        <taxon>Muroidea</taxon>
        <taxon>Muridae</taxon>
        <taxon>Murinae</taxon>
        <taxon>Rattus</taxon>
    </lineage>
</organism>
<feature type="chain" id="PRO_0000367037" description="Transmembrane protein 11, mitochondrial">
    <location>
        <begin position="1"/>
        <end position="190"/>
    </location>
</feature>
<feature type="transmembrane region" description="Helical" evidence="2">
    <location>
        <begin position="84"/>
        <end position="100"/>
    </location>
</feature>
<feature type="transmembrane region" description="Helical" evidence="2">
    <location>
        <begin position="107"/>
        <end position="124"/>
    </location>
</feature>
<gene>
    <name type="primary">Tmem11</name>
</gene>
<comment type="function">
    <text evidence="1">Plays a role in mitochondrial morphogenesis.</text>
</comment>
<comment type="subunit">
    <text evidence="1">Associates with the mitochondrial contact site and cristae organizing system (MICOS) complex, composed of at least MICOS10/MIC10, CHCHD3/MIC19, CHCHD6/MIC25, APOOL/MIC27, IMMT/MIC60, APOO/MIC23/MIC26 and QIL1/MIC13. This complex was also known under the names MINOS or MitOS complex. The MICOS complex associates with mitochondrial outer membrane proteins SAMM50, MTX1, MTX2 and DNAJC11, mitochondrial inner membrane protein TMEM11 and with HSPA9. Interacts with IMMT/MIC60.</text>
</comment>
<comment type="subcellular location">
    <subcellularLocation>
        <location evidence="1">Mitochondrion inner membrane</location>
        <topology evidence="1">Multi-pass membrane protein</topology>
    </subcellularLocation>
</comment>
<comment type="similarity">
    <text evidence="3">Belongs to the TMEM11 family.</text>
</comment>
<keyword id="KW-0472">Membrane</keyword>
<keyword id="KW-0496">Mitochondrion</keyword>
<keyword id="KW-0999">Mitochondrion inner membrane</keyword>
<keyword id="KW-1185">Reference proteome</keyword>
<keyword id="KW-0812">Transmembrane</keyword>
<keyword id="KW-1133">Transmembrane helix</keyword>
<reference key="1">
    <citation type="journal article" date="2004" name="Genome Res.">
        <title>The status, quality, and expansion of the NIH full-length cDNA project: the Mammalian Gene Collection (MGC).</title>
        <authorList>
            <consortium name="The MGC Project Team"/>
        </authorList>
    </citation>
    <scope>NUCLEOTIDE SEQUENCE [LARGE SCALE MRNA]</scope>
</reference>
<protein>
    <recommendedName>
        <fullName>Transmembrane protein 11, mitochondrial</fullName>
    </recommendedName>
</protein>
<evidence type="ECO:0000250" key="1">
    <source>
        <dbReference type="UniProtKB" id="P17152"/>
    </source>
</evidence>
<evidence type="ECO:0000255" key="2"/>
<evidence type="ECO:0000305" key="3"/>
<name>TMM11_RAT</name>
<sequence>MAAWGRRRLGPGGGSSRERVSLSATDCYIVHEIYSGENAQDQFEYELEQALEAQYKYIVIEPTRIGDETARWITVGNCLHKTAVLAGTACLFTPLALPLDYSHYISLPAGVLSLACCTLYGISWQFDPCCKYQVEYDAYKLSRLPLHTLTSSTPVVLVRKDDLHRKRLHNTIALAALVYCVKKVYELYAV</sequence>
<proteinExistence type="evidence at transcript level"/>
<accession>B0BN86</accession>
<dbReference type="EMBL" id="BC158725">
    <property type="protein sequence ID" value="AAI58726.1"/>
    <property type="molecule type" value="mRNA"/>
</dbReference>
<dbReference type="RefSeq" id="NP_001158015.1">
    <property type="nucleotide sequence ID" value="NM_001164543.1"/>
</dbReference>
<dbReference type="RefSeq" id="NP_001159637.1">
    <property type="nucleotide sequence ID" value="NM_001166165.1"/>
</dbReference>
<dbReference type="FunCoup" id="B0BN86">
    <property type="interactions" value="1504"/>
</dbReference>
<dbReference type="STRING" id="10116.ENSRNOP00000007158"/>
<dbReference type="PhosphoSitePlus" id="B0BN86"/>
<dbReference type="PaxDb" id="10116-ENSRNOP00000007158"/>
<dbReference type="PeptideAtlas" id="B0BN86"/>
<dbReference type="Ensembl" id="ENSRNOT00000007158.6">
    <property type="protein sequence ID" value="ENSRNOP00000007158.5"/>
    <property type="gene ID" value="ENSRNOG00000005377.7"/>
</dbReference>
<dbReference type="GeneID" id="303196"/>
<dbReference type="KEGG" id="rno:303196"/>
<dbReference type="UCSC" id="RGD:1309817">
    <property type="organism name" value="rat"/>
</dbReference>
<dbReference type="AGR" id="RGD:1309817"/>
<dbReference type="CTD" id="8834"/>
<dbReference type="RGD" id="1309817">
    <property type="gene designation" value="Tmem11"/>
</dbReference>
<dbReference type="eggNOG" id="ENOG502QUAI">
    <property type="taxonomic scope" value="Eukaryota"/>
</dbReference>
<dbReference type="GeneTree" id="ENSGT00390000006617"/>
<dbReference type="HOGENOM" id="CLU_095460_0_0_1"/>
<dbReference type="InParanoid" id="B0BN86"/>
<dbReference type="OMA" id="IGNCLHK"/>
<dbReference type="OrthoDB" id="9970856at2759"/>
<dbReference type="PhylomeDB" id="B0BN86"/>
<dbReference type="TreeFam" id="TF324685"/>
<dbReference type="PRO" id="PR:B0BN86"/>
<dbReference type="Proteomes" id="UP000002494">
    <property type="component" value="Chromosome 10"/>
</dbReference>
<dbReference type="Bgee" id="ENSRNOG00000005377">
    <property type="expression patterns" value="Expressed in quadriceps femoris and 20 other cell types or tissues"/>
</dbReference>
<dbReference type="ExpressionAtlas" id="B0BN86">
    <property type="expression patterns" value="baseline and differential"/>
</dbReference>
<dbReference type="GO" id="GO:0005743">
    <property type="term" value="C:mitochondrial inner membrane"/>
    <property type="evidence" value="ECO:0000250"/>
    <property type="project" value="UniProtKB"/>
</dbReference>
<dbReference type="GO" id="GO:0007007">
    <property type="term" value="P:inner mitochondrial membrane organization"/>
    <property type="evidence" value="ECO:0000318"/>
    <property type="project" value="GO_Central"/>
</dbReference>
<dbReference type="GO" id="GO:0007005">
    <property type="term" value="P:mitochondrion organization"/>
    <property type="evidence" value="ECO:0000250"/>
    <property type="project" value="UniProtKB"/>
</dbReference>
<dbReference type="InterPro" id="IPR026120">
    <property type="entry name" value="TMEM11"/>
</dbReference>
<dbReference type="PANTHER" id="PTHR15099">
    <property type="entry name" value="PROTEIN PM1"/>
    <property type="match status" value="1"/>
</dbReference>
<dbReference type="PANTHER" id="PTHR15099:SF2">
    <property type="entry name" value="TRANSMEMBRANE PROTEIN 11, MITOCHONDRIAL"/>
    <property type="match status" value="1"/>
</dbReference>
<dbReference type="Pfam" id="PF14972">
    <property type="entry name" value="Mito_morph_reg"/>
    <property type="match status" value="1"/>
</dbReference>